<feature type="chain" id="PRO_1000011118" description="Phosphopantetheine adenylyltransferase">
    <location>
        <begin position="1"/>
        <end position="158"/>
    </location>
</feature>
<feature type="binding site" evidence="1">
    <location>
        <begin position="8"/>
        <end position="9"/>
    </location>
    <ligand>
        <name>ATP</name>
        <dbReference type="ChEBI" id="CHEBI:30616"/>
    </ligand>
</feature>
<feature type="binding site" evidence="1">
    <location>
        <position position="8"/>
    </location>
    <ligand>
        <name>substrate</name>
    </ligand>
</feature>
<feature type="binding site" evidence="1">
    <location>
        <position position="16"/>
    </location>
    <ligand>
        <name>ATP</name>
        <dbReference type="ChEBI" id="CHEBI:30616"/>
    </ligand>
</feature>
<feature type="binding site" evidence="1">
    <location>
        <position position="40"/>
    </location>
    <ligand>
        <name>substrate</name>
    </ligand>
</feature>
<feature type="binding site" evidence="1">
    <location>
        <position position="72"/>
    </location>
    <ligand>
        <name>substrate</name>
    </ligand>
</feature>
<feature type="binding site" evidence="1">
    <location>
        <position position="86"/>
    </location>
    <ligand>
        <name>substrate</name>
    </ligand>
</feature>
<feature type="binding site" evidence="1">
    <location>
        <begin position="87"/>
        <end position="89"/>
    </location>
    <ligand>
        <name>ATP</name>
        <dbReference type="ChEBI" id="CHEBI:30616"/>
    </ligand>
</feature>
<feature type="binding site" evidence="1">
    <location>
        <position position="97"/>
    </location>
    <ligand>
        <name>ATP</name>
        <dbReference type="ChEBI" id="CHEBI:30616"/>
    </ligand>
</feature>
<feature type="binding site" evidence="1">
    <location>
        <begin position="122"/>
        <end position="128"/>
    </location>
    <ligand>
        <name>ATP</name>
        <dbReference type="ChEBI" id="CHEBI:30616"/>
    </ligand>
</feature>
<feature type="site" description="Transition state stabilizer" evidence="1">
    <location>
        <position position="16"/>
    </location>
</feature>
<comment type="function">
    <text evidence="1">Reversibly transfers an adenylyl group from ATP to 4'-phosphopantetheine, yielding dephospho-CoA (dPCoA) and pyrophosphate.</text>
</comment>
<comment type="catalytic activity">
    <reaction evidence="1">
        <text>(R)-4'-phosphopantetheine + ATP + H(+) = 3'-dephospho-CoA + diphosphate</text>
        <dbReference type="Rhea" id="RHEA:19801"/>
        <dbReference type="ChEBI" id="CHEBI:15378"/>
        <dbReference type="ChEBI" id="CHEBI:30616"/>
        <dbReference type="ChEBI" id="CHEBI:33019"/>
        <dbReference type="ChEBI" id="CHEBI:57328"/>
        <dbReference type="ChEBI" id="CHEBI:61723"/>
        <dbReference type="EC" id="2.7.7.3"/>
    </reaction>
</comment>
<comment type="cofactor">
    <cofactor evidence="1">
        <name>Mg(2+)</name>
        <dbReference type="ChEBI" id="CHEBI:18420"/>
    </cofactor>
</comment>
<comment type="pathway">
    <text evidence="1">Cofactor biosynthesis; coenzyme A biosynthesis; CoA from (R)-pantothenate: step 4/5.</text>
</comment>
<comment type="subunit">
    <text evidence="1">Homohexamer.</text>
</comment>
<comment type="subcellular location">
    <subcellularLocation>
        <location evidence="1">Cytoplasm</location>
    </subcellularLocation>
</comment>
<comment type="similarity">
    <text evidence="1">Belongs to the bacterial CoaD family.</text>
</comment>
<organism>
    <name type="scientific">Campylobacter jejuni subsp. jejuni serotype O:23/36 (strain 81-176)</name>
    <dbReference type="NCBI Taxonomy" id="354242"/>
    <lineage>
        <taxon>Bacteria</taxon>
        <taxon>Pseudomonadati</taxon>
        <taxon>Campylobacterota</taxon>
        <taxon>Epsilonproteobacteria</taxon>
        <taxon>Campylobacterales</taxon>
        <taxon>Campylobacteraceae</taxon>
        <taxon>Campylobacter</taxon>
    </lineage>
</organism>
<proteinExistence type="inferred from homology"/>
<keyword id="KW-0067">ATP-binding</keyword>
<keyword id="KW-0173">Coenzyme A biosynthesis</keyword>
<keyword id="KW-0963">Cytoplasm</keyword>
<keyword id="KW-0460">Magnesium</keyword>
<keyword id="KW-0547">Nucleotide-binding</keyword>
<keyword id="KW-0548">Nucleotidyltransferase</keyword>
<keyword id="KW-0808">Transferase</keyword>
<reference key="1">
    <citation type="submission" date="2006-12" db="EMBL/GenBank/DDBJ databases">
        <authorList>
            <person name="Fouts D.E."/>
            <person name="Nelson K.E."/>
            <person name="Sebastian Y."/>
        </authorList>
    </citation>
    <scope>NUCLEOTIDE SEQUENCE [LARGE SCALE GENOMIC DNA]</scope>
    <source>
        <strain>81-176</strain>
    </source>
</reference>
<dbReference type="EC" id="2.7.7.3" evidence="1"/>
<dbReference type="EMBL" id="CP000538">
    <property type="protein sequence ID" value="EAQ72364.1"/>
    <property type="molecule type" value="Genomic_DNA"/>
</dbReference>
<dbReference type="RefSeq" id="WP_002852633.1">
    <property type="nucleotide sequence ID" value="NC_008787.1"/>
</dbReference>
<dbReference type="SMR" id="A1VZB5"/>
<dbReference type="KEGG" id="cjj:CJJ81176_0788"/>
<dbReference type="eggNOG" id="COG0669">
    <property type="taxonomic scope" value="Bacteria"/>
</dbReference>
<dbReference type="HOGENOM" id="CLU_100149_0_1_7"/>
<dbReference type="UniPathway" id="UPA00241">
    <property type="reaction ID" value="UER00355"/>
</dbReference>
<dbReference type="Proteomes" id="UP000000646">
    <property type="component" value="Chromosome"/>
</dbReference>
<dbReference type="GO" id="GO:0005737">
    <property type="term" value="C:cytoplasm"/>
    <property type="evidence" value="ECO:0007669"/>
    <property type="project" value="UniProtKB-SubCell"/>
</dbReference>
<dbReference type="GO" id="GO:0005524">
    <property type="term" value="F:ATP binding"/>
    <property type="evidence" value="ECO:0007669"/>
    <property type="project" value="UniProtKB-KW"/>
</dbReference>
<dbReference type="GO" id="GO:0004595">
    <property type="term" value="F:pantetheine-phosphate adenylyltransferase activity"/>
    <property type="evidence" value="ECO:0007669"/>
    <property type="project" value="UniProtKB-UniRule"/>
</dbReference>
<dbReference type="GO" id="GO:0015937">
    <property type="term" value="P:coenzyme A biosynthetic process"/>
    <property type="evidence" value="ECO:0007669"/>
    <property type="project" value="UniProtKB-UniRule"/>
</dbReference>
<dbReference type="CDD" id="cd02163">
    <property type="entry name" value="PPAT"/>
    <property type="match status" value="1"/>
</dbReference>
<dbReference type="Gene3D" id="3.40.50.620">
    <property type="entry name" value="HUPs"/>
    <property type="match status" value="1"/>
</dbReference>
<dbReference type="HAMAP" id="MF_00151">
    <property type="entry name" value="PPAT_bact"/>
    <property type="match status" value="1"/>
</dbReference>
<dbReference type="InterPro" id="IPR004821">
    <property type="entry name" value="Cyt_trans-like"/>
</dbReference>
<dbReference type="InterPro" id="IPR001980">
    <property type="entry name" value="PPAT"/>
</dbReference>
<dbReference type="InterPro" id="IPR014729">
    <property type="entry name" value="Rossmann-like_a/b/a_fold"/>
</dbReference>
<dbReference type="NCBIfam" id="TIGR01510">
    <property type="entry name" value="coaD_prev_kdtB"/>
    <property type="match status" value="1"/>
</dbReference>
<dbReference type="NCBIfam" id="TIGR00125">
    <property type="entry name" value="cyt_tran_rel"/>
    <property type="match status" value="1"/>
</dbReference>
<dbReference type="PANTHER" id="PTHR21342">
    <property type="entry name" value="PHOSPHOPANTETHEINE ADENYLYLTRANSFERASE"/>
    <property type="match status" value="1"/>
</dbReference>
<dbReference type="PANTHER" id="PTHR21342:SF1">
    <property type="entry name" value="PHOSPHOPANTETHEINE ADENYLYLTRANSFERASE"/>
    <property type="match status" value="1"/>
</dbReference>
<dbReference type="Pfam" id="PF01467">
    <property type="entry name" value="CTP_transf_like"/>
    <property type="match status" value="1"/>
</dbReference>
<dbReference type="PRINTS" id="PR01020">
    <property type="entry name" value="LPSBIOSNTHSS"/>
</dbReference>
<dbReference type="SUPFAM" id="SSF52374">
    <property type="entry name" value="Nucleotidylyl transferase"/>
    <property type="match status" value="1"/>
</dbReference>
<protein>
    <recommendedName>
        <fullName evidence="1">Phosphopantetheine adenylyltransferase</fullName>
        <ecNumber evidence="1">2.7.7.3</ecNumber>
    </recommendedName>
    <alternativeName>
        <fullName evidence="1">Dephospho-CoA pyrophosphorylase</fullName>
    </alternativeName>
    <alternativeName>
        <fullName evidence="1">Pantetheine-phosphate adenylyltransferase</fullName>
        <shortName evidence="1">PPAT</shortName>
    </alternativeName>
</protein>
<sequence>MTCLYPGTFDPITNGHLDVIKRALKIFDEVIVAIAKSEHKKPCYDLEKRKELALLATQNLKNVKIIAFDNLLVDLAKELKVNTIIRGLRAVSDFEYELQIGYANHALWEDMETIYLMPSLKHAFISSSIVRSIVAHGGDVSSLVPKEILPFLKDQSCM</sequence>
<evidence type="ECO:0000255" key="1">
    <source>
        <dbReference type="HAMAP-Rule" id="MF_00151"/>
    </source>
</evidence>
<gene>
    <name evidence="1" type="primary">coaD</name>
    <name type="ordered locus">CJJ81176_0788</name>
</gene>
<accession>A1VZB5</accession>
<name>COAD_CAMJJ</name>